<protein>
    <recommendedName>
        <fullName evidence="1">Transcription termination factor Rho</fullName>
        <ecNumber evidence="1">3.6.4.-</ecNumber>
    </recommendedName>
    <alternativeName>
        <fullName evidence="1">ATP-dependent helicase Rho</fullName>
    </alternativeName>
</protein>
<name>RHO_STRCO</name>
<dbReference type="EC" id="3.6.4.-" evidence="1"/>
<dbReference type="EMBL" id="AL939130">
    <property type="protein sequence ID" value="CAC01549.1"/>
    <property type="molecule type" value="Genomic_DNA"/>
</dbReference>
<dbReference type="RefSeq" id="NP_631113.1">
    <property type="nucleotide sequence ID" value="NC_003888.3"/>
</dbReference>
<dbReference type="RefSeq" id="WP_003972093.1">
    <property type="nucleotide sequence ID" value="NZ_VNID01000012.1"/>
</dbReference>
<dbReference type="SMR" id="Q9FC33"/>
<dbReference type="STRING" id="100226.gene:17764711"/>
<dbReference type="PaxDb" id="100226-SCO7051"/>
<dbReference type="KEGG" id="sco:SCO7051"/>
<dbReference type="PATRIC" id="fig|100226.15.peg.7155"/>
<dbReference type="eggNOG" id="COG1158">
    <property type="taxonomic scope" value="Bacteria"/>
</dbReference>
<dbReference type="HOGENOM" id="CLU_016377_4_3_11"/>
<dbReference type="InParanoid" id="Q9FC33"/>
<dbReference type="OrthoDB" id="9805197at2"/>
<dbReference type="PhylomeDB" id="Q9FC33"/>
<dbReference type="Proteomes" id="UP000001973">
    <property type="component" value="Chromosome"/>
</dbReference>
<dbReference type="GO" id="GO:0005524">
    <property type="term" value="F:ATP binding"/>
    <property type="evidence" value="ECO:0007669"/>
    <property type="project" value="UniProtKB-UniRule"/>
</dbReference>
<dbReference type="GO" id="GO:0016887">
    <property type="term" value="F:ATP hydrolysis activity"/>
    <property type="evidence" value="ECO:0007669"/>
    <property type="project" value="InterPro"/>
</dbReference>
<dbReference type="GO" id="GO:0008186">
    <property type="term" value="F:ATP-dependent activity, acting on RNA"/>
    <property type="evidence" value="ECO:0007669"/>
    <property type="project" value="InterPro"/>
</dbReference>
<dbReference type="GO" id="GO:0004386">
    <property type="term" value="F:helicase activity"/>
    <property type="evidence" value="ECO:0007669"/>
    <property type="project" value="UniProtKB-UniRule"/>
</dbReference>
<dbReference type="GO" id="GO:0003723">
    <property type="term" value="F:RNA binding"/>
    <property type="evidence" value="ECO:0007669"/>
    <property type="project" value="UniProtKB-UniRule"/>
</dbReference>
<dbReference type="GO" id="GO:0006353">
    <property type="term" value="P:DNA-templated transcription termination"/>
    <property type="evidence" value="ECO:0000318"/>
    <property type="project" value="GO_Central"/>
</dbReference>
<dbReference type="CDD" id="cd01128">
    <property type="entry name" value="rho_factor_C"/>
    <property type="match status" value="1"/>
</dbReference>
<dbReference type="Gene3D" id="2.40.50.140">
    <property type="entry name" value="Nucleic acid-binding proteins"/>
    <property type="match status" value="1"/>
</dbReference>
<dbReference type="Gene3D" id="3.40.50.300">
    <property type="entry name" value="P-loop containing nucleotide triphosphate hydrolases"/>
    <property type="match status" value="1"/>
</dbReference>
<dbReference type="HAMAP" id="MF_01884">
    <property type="entry name" value="Rho"/>
    <property type="match status" value="1"/>
</dbReference>
<dbReference type="InterPro" id="IPR003593">
    <property type="entry name" value="AAA+_ATPase"/>
</dbReference>
<dbReference type="InterPro" id="IPR000194">
    <property type="entry name" value="ATPase_F1/V1/A1_a/bsu_nucl-bd"/>
</dbReference>
<dbReference type="InterPro" id="IPR012340">
    <property type="entry name" value="NA-bd_OB-fold"/>
</dbReference>
<dbReference type="InterPro" id="IPR027417">
    <property type="entry name" value="P-loop_NTPase"/>
</dbReference>
<dbReference type="InterPro" id="IPR041703">
    <property type="entry name" value="Rho_factor_ATP-bd"/>
</dbReference>
<dbReference type="InterPro" id="IPR011113">
    <property type="entry name" value="Rho_RNA-bd"/>
</dbReference>
<dbReference type="InterPro" id="IPR004665">
    <property type="entry name" value="Term_rho"/>
</dbReference>
<dbReference type="NCBIfam" id="NF006886">
    <property type="entry name" value="PRK09376.1"/>
    <property type="match status" value="1"/>
</dbReference>
<dbReference type="PANTHER" id="PTHR46425">
    <property type="entry name" value="TRANSCRIPTION TERMINATION FACTOR RHO"/>
    <property type="match status" value="1"/>
</dbReference>
<dbReference type="PANTHER" id="PTHR46425:SF1">
    <property type="entry name" value="TRANSCRIPTION TERMINATION FACTOR RHO"/>
    <property type="match status" value="1"/>
</dbReference>
<dbReference type="Pfam" id="PF00006">
    <property type="entry name" value="ATP-synt_ab"/>
    <property type="match status" value="1"/>
</dbReference>
<dbReference type="Pfam" id="PF07497">
    <property type="entry name" value="Rho_RNA_bind"/>
    <property type="match status" value="1"/>
</dbReference>
<dbReference type="SMART" id="SM00382">
    <property type="entry name" value="AAA"/>
    <property type="match status" value="1"/>
</dbReference>
<dbReference type="SUPFAM" id="SSF50249">
    <property type="entry name" value="Nucleic acid-binding proteins"/>
    <property type="match status" value="1"/>
</dbReference>
<dbReference type="SUPFAM" id="SSF52540">
    <property type="entry name" value="P-loop containing nucleoside triphosphate hydrolases"/>
    <property type="match status" value="1"/>
</dbReference>
<dbReference type="PROSITE" id="PS51856">
    <property type="entry name" value="RHO_RNA_BD"/>
    <property type="match status" value="1"/>
</dbReference>
<sequence>MSEVLFPAVRRRVVRPLARLFPSLRMSHARVLERTDHMTTTLEHPPVQHAQADIASGVLDIETGGKGRLRGRNLQPEPADPALSPALIRRHGLRRGDLVEGVCGDRRTLTDVVRVNGRTPDRRSRPHFADLTPLHPHERLRLEHPAAGLAGRVVDLLAPVGKGQRGLIVAPPKTGKTVLLQQFAAAVAGNHPEARLMVVLLDERPEEVTDMRRSVRGEVYSSTFDRSARQHIALAELVIERAKRLVEAGEDVVILLDSLTRLCRAHNNAASSGGRTLSGGVDAGALLGPKRFFGAARKAEEGGSLTILATALVETGSRADDFYFEELKSTGNMELRLSREPASRRVFPAVEPVGSGTRREELLLSGAETTALRGLRRALVARDGQSGLETLLERLRRTPDNATFLRQVQPTLPAG</sequence>
<comment type="function">
    <text evidence="1">Facilitates transcription termination by a mechanism that involves Rho binding to the nascent RNA, activation of Rho's RNA-dependent ATPase activity, and release of the mRNA from the DNA template.</text>
</comment>
<comment type="subunit">
    <text evidence="1">Homohexamer. The homohexamer assembles into an open ring structure.</text>
</comment>
<comment type="similarity">
    <text evidence="1">Belongs to the Rho family.</text>
</comment>
<reference key="1">
    <citation type="journal article" date="2002" name="Nature">
        <title>Complete genome sequence of the model actinomycete Streptomyces coelicolor A3(2).</title>
        <authorList>
            <person name="Bentley S.D."/>
            <person name="Chater K.F."/>
            <person name="Cerdeno-Tarraga A.-M."/>
            <person name="Challis G.L."/>
            <person name="Thomson N.R."/>
            <person name="James K.D."/>
            <person name="Harris D.E."/>
            <person name="Quail M.A."/>
            <person name="Kieser H."/>
            <person name="Harper D."/>
            <person name="Bateman A."/>
            <person name="Brown S."/>
            <person name="Chandra G."/>
            <person name="Chen C.W."/>
            <person name="Collins M."/>
            <person name="Cronin A."/>
            <person name="Fraser A."/>
            <person name="Goble A."/>
            <person name="Hidalgo J."/>
            <person name="Hornsby T."/>
            <person name="Howarth S."/>
            <person name="Huang C.-H."/>
            <person name="Kieser T."/>
            <person name="Larke L."/>
            <person name="Murphy L.D."/>
            <person name="Oliver K."/>
            <person name="O'Neil S."/>
            <person name="Rabbinowitsch E."/>
            <person name="Rajandream M.A."/>
            <person name="Rutherford K.M."/>
            <person name="Rutter S."/>
            <person name="Seeger K."/>
            <person name="Saunders D."/>
            <person name="Sharp S."/>
            <person name="Squares R."/>
            <person name="Squares S."/>
            <person name="Taylor K."/>
            <person name="Warren T."/>
            <person name="Wietzorrek A."/>
            <person name="Woodward J.R."/>
            <person name="Barrell B.G."/>
            <person name="Parkhill J."/>
            <person name="Hopwood D.A."/>
        </authorList>
    </citation>
    <scope>NUCLEOTIDE SEQUENCE [LARGE SCALE GENOMIC DNA]</scope>
    <source>
        <strain>ATCC BAA-471 / A3(2) / M145</strain>
    </source>
</reference>
<organism>
    <name type="scientific">Streptomyces coelicolor (strain ATCC BAA-471 / A3(2) / M145)</name>
    <dbReference type="NCBI Taxonomy" id="100226"/>
    <lineage>
        <taxon>Bacteria</taxon>
        <taxon>Bacillati</taxon>
        <taxon>Actinomycetota</taxon>
        <taxon>Actinomycetes</taxon>
        <taxon>Kitasatosporales</taxon>
        <taxon>Streptomycetaceae</taxon>
        <taxon>Streptomyces</taxon>
        <taxon>Streptomyces albidoflavus group</taxon>
    </lineage>
</organism>
<proteinExistence type="inferred from homology"/>
<evidence type="ECO:0000255" key="1">
    <source>
        <dbReference type="HAMAP-Rule" id="MF_01884"/>
    </source>
</evidence>
<evidence type="ECO:0000255" key="2">
    <source>
        <dbReference type="PROSITE-ProRule" id="PRU01203"/>
    </source>
</evidence>
<feature type="chain" id="PRO_0000398673" description="Transcription termination factor Rho">
    <location>
        <begin position="1"/>
        <end position="415"/>
    </location>
</feature>
<feature type="domain" description="Rho RNA-BD" evidence="2">
    <location>
        <begin position="52"/>
        <end position="119"/>
    </location>
</feature>
<feature type="binding site" evidence="1">
    <location>
        <begin position="161"/>
        <end position="166"/>
    </location>
    <ligand>
        <name>ATP</name>
        <dbReference type="ChEBI" id="CHEBI:30616"/>
    </ligand>
</feature>
<feature type="binding site" evidence="1">
    <location>
        <begin position="173"/>
        <end position="178"/>
    </location>
    <ligand>
        <name>ATP</name>
        <dbReference type="ChEBI" id="CHEBI:30616"/>
    </ligand>
</feature>
<feature type="binding site" evidence="1">
    <location>
        <position position="204"/>
    </location>
    <ligand>
        <name>ATP</name>
        <dbReference type="ChEBI" id="CHEBI:30616"/>
    </ligand>
</feature>
<gene>
    <name evidence="1" type="primary">rho</name>
    <name type="ordered locus">SCO7051</name>
    <name type="ORF">SC4G1.17c</name>
</gene>
<keyword id="KW-0067">ATP-binding</keyword>
<keyword id="KW-0347">Helicase</keyword>
<keyword id="KW-0378">Hydrolase</keyword>
<keyword id="KW-0547">Nucleotide-binding</keyword>
<keyword id="KW-1185">Reference proteome</keyword>
<keyword id="KW-0694">RNA-binding</keyword>
<keyword id="KW-0804">Transcription</keyword>
<keyword id="KW-0805">Transcription regulation</keyword>
<keyword id="KW-0806">Transcription termination</keyword>
<accession>Q9FC33</accession>